<proteinExistence type="inferred from homology"/>
<evidence type="ECO:0000255" key="1">
    <source>
        <dbReference type="HAMAP-Rule" id="MF_01456"/>
    </source>
</evidence>
<keyword id="KW-1003">Cell membrane</keyword>
<keyword id="KW-0472">Membrane</keyword>
<keyword id="KW-0520">NAD</keyword>
<keyword id="KW-0874">Quinone</keyword>
<keyword id="KW-1278">Translocase</keyword>
<keyword id="KW-0812">Transmembrane</keyword>
<keyword id="KW-1133">Transmembrane helix</keyword>
<keyword id="KW-0813">Transport</keyword>
<reference key="1">
    <citation type="submission" date="2008-10" db="EMBL/GenBank/DDBJ databases">
        <title>Genome sequence of Bacillus cereus AH820.</title>
        <authorList>
            <person name="Dodson R.J."/>
            <person name="Durkin A.S."/>
            <person name="Rosovitz M.J."/>
            <person name="Rasko D.A."/>
            <person name="Hoffmaster A."/>
            <person name="Ravel J."/>
            <person name="Sutton G."/>
        </authorList>
    </citation>
    <scope>NUCLEOTIDE SEQUENCE [LARGE SCALE GENOMIC DNA]</scope>
    <source>
        <strain>AH820</strain>
    </source>
</reference>
<feature type="chain" id="PRO_0000389942" description="NADH-quinone oxidoreductase subunit K">
    <location>
        <begin position="1"/>
        <end position="104"/>
    </location>
</feature>
<feature type="transmembrane region" description="Helical" evidence="1">
    <location>
        <begin position="4"/>
        <end position="24"/>
    </location>
</feature>
<feature type="transmembrane region" description="Helical" evidence="1">
    <location>
        <begin position="31"/>
        <end position="51"/>
    </location>
</feature>
<feature type="transmembrane region" description="Helical" evidence="1">
    <location>
        <begin position="67"/>
        <end position="87"/>
    </location>
</feature>
<organism>
    <name type="scientific">Bacillus cereus (strain AH820)</name>
    <dbReference type="NCBI Taxonomy" id="405535"/>
    <lineage>
        <taxon>Bacteria</taxon>
        <taxon>Bacillati</taxon>
        <taxon>Bacillota</taxon>
        <taxon>Bacilli</taxon>
        <taxon>Bacillales</taxon>
        <taxon>Bacillaceae</taxon>
        <taxon>Bacillus</taxon>
        <taxon>Bacillus cereus group</taxon>
    </lineage>
</organism>
<sequence>MSSVPASAYLTLAIILFCIGLFGALTKRNTVIVLVCIELMLNAANLNLVAFSKLGLFPNLTGQIFSLFTMAVAAAEAAVGLAILIALYRNRTTVHVDEMDTLKG</sequence>
<name>NUOK_BACC0</name>
<comment type="function">
    <text evidence="1">NDH-1 shuttles electrons from NADH, via FMN and iron-sulfur (Fe-S) centers, to quinones in the respiratory chain. The immediate electron acceptor for the enzyme in this species is believed to be a menaquinone. Couples the redox reaction to proton translocation (for every two electrons transferred, four hydrogen ions are translocated across the cytoplasmic membrane), and thus conserves the redox energy in a proton gradient.</text>
</comment>
<comment type="catalytic activity">
    <reaction evidence="1">
        <text>a quinone + NADH + 5 H(+)(in) = a quinol + NAD(+) + 4 H(+)(out)</text>
        <dbReference type="Rhea" id="RHEA:57888"/>
        <dbReference type="ChEBI" id="CHEBI:15378"/>
        <dbReference type="ChEBI" id="CHEBI:24646"/>
        <dbReference type="ChEBI" id="CHEBI:57540"/>
        <dbReference type="ChEBI" id="CHEBI:57945"/>
        <dbReference type="ChEBI" id="CHEBI:132124"/>
    </reaction>
</comment>
<comment type="subunit">
    <text evidence="1">NDH-1 is composed of 14 different subunits. Subunits NuoA, H, J, K, L, M, N constitute the membrane sector of the complex.</text>
</comment>
<comment type="subcellular location">
    <subcellularLocation>
        <location evidence="1">Cell membrane</location>
        <topology evidence="1">Multi-pass membrane protein</topology>
    </subcellularLocation>
</comment>
<comment type="similarity">
    <text evidence="1">Belongs to the complex I subunit 4L family.</text>
</comment>
<dbReference type="EC" id="7.1.1.-" evidence="1"/>
<dbReference type="EMBL" id="CP001283">
    <property type="protein sequence ID" value="ACK91541.1"/>
    <property type="molecule type" value="Genomic_DNA"/>
</dbReference>
<dbReference type="RefSeq" id="WP_000100078.1">
    <property type="nucleotide sequence ID" value="NC_011773.1"/>
</dbReference>
<dbReference type="SMR" id="B7JGL8"/>
<dbReference type="GeneID" id="92803549"/>
<dbReference type="KEGG" id="bcu:BCAH820_5384"/>
<dbReference type="HOGENOM" id="CLU_144724_0_0_9"/>
<dbReference type="Proteomes" id="UP000001363">
    <property type="component" value="Chromosome"/>
</dbReference>
<dbReference type="GO" id="GO:0030964">
    <property type="term" value="C:NADH dehydrogenase complex"/>
    <property type="evidence" value="ECO:0007669"/>
    <property type="project" value="TreeGrafter"/>
</dbReference>
<dbReference type="GO" id="GO:0005886">
    <property type="term" value="C:plasma membrane"/>
    <property type="evidence" value="ECO:0007669"/>
    <property type="project" value="UniProtKB-SubCell"/>
</dbReference>
<dbReference type="GO" id="GO:0050136">
    <property type="term" value="F:NADH:ubiquinone reductase (non-electrogenic) activity"/>
    <property type="evidence" value="ECO:0007669"/>
    <property type="project" value="UniProtKB-UniRule"/>
</dbReference>
<dbReference type="GO" id="GO:0048038">
    <property type="term" value="F:quinone binding"/>
    <property type="evidence" value="ECO:0007669"/>
    <property type="project" value="UniProtKB-KW"/>
</dbReference>
<dbReference type="GO" id="GO:0042773">
    <property type="term" value="P:ATP synthesis coupled electron transport"/>
    <property type="evidence" value="ECO:0007669"/>
    <property type="project" value="InterPro"/>
</dbReference>
<dbReference type="FunFam" id="1.10.287.3510:FF:000001">
    <property type="entry name" value="NADH-quinone oxidoreductase subunit K"/>
    <property type="match status" value="1"/>
</dbReference>
<dbReference type="Gene3D" id="1.10.287.3510">
    <property type="match status" value="1"/>
</dbReference>
<dbReference type="HAMAP" id="MF_01456">
    <property type="entry name" value="NDH1_NuoK"/>
    <property type="match status" value="1"/>
</dbReference>
<dbReference type="InterPro" id="IPR001133">
    <property type="entry name" value="NADH_UbQ_OxRdtase_chain4L/K"/>
</dbReference>
<dbReference type="InterPro" id="IPR039428">
    <property type="entry name" value="NUOK/Mnh_C1-like"/>
</dbReference>
<dbReference type="NCBIfam" id="NF004320">
    <property type="entry name" value="PRK05715.1-2"/>
    <property type="match status" value="1"/>
</dbReference>
<dbReference type="NCBIfam" id="NF004321">
    <property type="entry name" value="PRK05715.1-3"/>
    <property type="match status" value="1"/>
</dbReference>
<dbReference type="NCBIfam" id="NF004322">
    <property type="entry name" value="PRK05715.1-4"/>
    <property type="match status" value="1"/>
</dbReference>
<dbReference type="NCBIfam" id="NF004323">
    <property type="entry name" value="PRK05715.1-5"/>
    <property type="match status" value="1"/>
</dbReference>
<dbReference type="PANTHER" id="PTHR11434:SF16">
    <property type="entry name" value="NADH-UBIQUINONE OXIDOREDUCTASE CHAIN 4L"/>
    <property type="match status" value="1"/>
</dbReference>
<dbReference type="PANTHER" id="PTHR11434">
    <property type="entry name" value="NADH-UBIQUINONE OXIDOREDUCTASE SUBUNIT ND4L"/>
    <property type="match status" value="1"/>
</dbReference>
<dbReference type="Pfam" id="PF00420">
    <property type="entry name" value="Oxidored_q2"/>
    <property type="match status" value="1"/>
</dbReference>
<protein>
    <recommendedName>
        <fullName evidence="1">NADH-quinone oxidoreductase subunit K</fullName>
        <ecNumber evidence="1">7.1.1.-</ecNumber>
    </recommendedName>
    <alternativeName>
        <fullName evidence="1">NADH dehydrogenase I subunit K</fullName>
    </alternativeName>
    <alternativeName>
        <fullName evidence="1">NDH-1 subunit K</fullName>
    </alternativeName>
</protein>
<gene>
    <name evidence="1" type="primary">nuoK</name>
    <name type="ordered locus">BCAH820_5384</name>
</gene>
<accession>B7JGL8</accession>